<reference key="1">
    <citation type="journal article" date="1996" name="J. Bacteriol.">
        <title>Deduced amino acid sequence, functional expression, and unique enzymatic properties of the form I and form II ribulose bisphosphate carboxylase/oxygenase from the chemoautotrophic bacterium Thiobacillus denitrificans.</title>
        <authorList>
            <person name="Hernandez J.M."/>
            <person name="Baker S.H."/>
            <person name="Lorbach S.C."/>
            <person name="Shively J.M."/>
            <person name="Tabita F.R."/>
        </authorList>
    </citation>
    <scope>NUCLEOTIDE SEQUENCE [GENOMIC DNA]</scope>
</reference>
<reference key="2">
    <citation type="journal article" date="2006" name="J. Bacteriol.">
        <title>The genome sequence of the obligately chemolithoautotrophic, facultatively anaerobic bacterium Thiobacillus denitrificans.</title>
        <authorList>
            <person name="Beller H.R."/>
            <person name="Chain P.S."/>
            <person name="Letain T.E."/>
            <person name="Chakicherla A."/>
            <person name="Larimer F.W."/>
            <person name="Richardson P.M."/>
            <person name="Coleman M.A."/>
            <person name="Wood A.P."/>
            <person name="Kelly D.P."/>
        </authorList>
    </citation>
    <scope>NUCLEOTIDE SEQUENCE [LARGE SCALE GENOMIC DNA]</scope>
    <source>
        <strain>ATCC 25259 / T1</strain>
    </source>
</reference>
<feature type="chain" id="PRO_0000198628" description="Ribulose bisphosphate carboxylase small subunit">
    <location>
        <begin position="1"/>
        <end position="118"/>
    </location>
</feature>
<organism>
    <name type="scientific">Thiobacillus denitrificans (strain ATCC 25259 / T1)</name>
    <dbReference type="NCBI Taxonomy" id="292415"/>
    <lineage>
        <taxon>Bacteria</taxon>
        <taxon>Pseudomonadati</taxon>
        <taxon>Pseudomonadota</taxon>
        <taxon>Betaproteobacteria</taxon>
        <taxon>Nitrosomonadales</taxon>
        <taxon>Thiobacillaceae</taxon>
        <taxon>Thiobacillus</taxon>
    </lineage>
</organism>
<keyword id="KW-0113">Calvin cycle</keyword>
<keyword id="KW-0120">Carbon dioxide fixation</keyword>
<keyword id="KW-1185">Reference proteome</keyword>
<name>RBS_THIDA</name>
<evidence type="ECO:0000255" key="1">
    <source>
        <dbReference type="HAMAP-Rule" id="MF_00859"/>
    </source>
</evidence>
<sequence>MSEVMDYKSRLSDPASRKFETFSYLPAMNAADIRKQVEYLVSKGWNPAIEHTEPEHLMDSYWYMWKLPMFGETDIDRILGEAEACHKANPNNHVRLVGYDNFAQSQGAAMVIYRGKTV</sequence>
<accession>Q56260</accession>
<accession>Q3SFN0</accession>
<protein>
    <recommendedName>
        <fullName evidence="1">Ribulose bisphosphate carboxylase small subunit</fullName>
        <shortName evidence="1">RuBisCO small subunit</shortName>
    </recommendedName>
</protein>
<gene>
    <name evidence="1" type="primary">cbbS</name>
    <name type="ordered locus">Tbd_2623</name>
</gene>
<proteinExistence type="inferred from homology"/>
<dbReference type="EMBL" id="L42940">
    <property type="protein sequence ID" value="AAB70698.1"/>
    <property type="molecule type" value="Genomic_DNA"/>
</dbReference>
<dbReference type="EMBL" id="CP000116">
    <property type="protein sequence ID" value="AAZ98576.1"/>
    <property type="molecule type" value="Genomic_DNA"/>
</dbReference>
<dbReference type="RefSeq" id="WP_011313135.1">
    <property type="nucleotide sequence ID" value="NC_007404.1"/>
</dbReference>
<dbReference type="SMR" id="Q56260"/>
<dbReference type="STRING" id="292415.Tbd_2623"/>
<dbReference type="KEGG" id="tbd:Tbd_2623"/>
<dbReference type="eggNOG" id="COG4451">
    <property type="taxonomic scope" value="Bacteria"/>
</dbReference>
<dbReference type="HOGENOM" id="CLU_098114_2_0_4"/>
<dbReference type="OrthoDB" id="9788955at2"/>
<dbReference type="Proteomes" id="UP000008291">
    <property type="component" value="Chromosome"/>
</dbReference>
<dbReference type="GO" id="GO:0016984">
    <property type="term" value="F:ribulose-bisphosphate carboxylase activity"/>
    <property type="evidence" value="ECO:0007669"/>
    <property type="project" value="UniProtKB-UniRule"/>
</dbReference>
<dbReference type="GO" id="GO:0019253">
    <property type="term" value="P:reductive pentose-phosphate cycle"/>
    <property type="evidence" value="ECO:0007669"/>
    <property type="project" value="UniProtKB-UniRule"/>
</dbReference>
<dbReference type="CDD" id="cd03527">
    <property type="entry name" value="RuBisCO_small"/>
    <property type="match status" value="1"/>
</dbReference>
<dbReference type="Gene3D" id="3.30.190.10">
    <property type="entry name" value="Ribulose bisphosphate carboxylase, small subunit"/>
    <property type="match status" value="1"/>
</dbReference>
<dbReference type="HAMAP" id="MF_00859">
    <property type="entry name" value="RuBisCO_S_bact"/>
    <property type="match status" value="1"/>
</dbReference>
<dbReference type="InterPro" id="IPR024681">
    <property type="entry name" value="RuBisCO_ssu"/>
</dbReference>
<dbReference type="InterPro" id="IPR000894">
    <property type="entry name" value="RuBisCO_ssu_dom"/>
</dbReference>
<dbReference type="InterPro" id="IPR036385">
    <property type="entry name" value="RuBisCO_ssu_sf"/>
</dbReference>
<dbReference type="PANTHER" id="PTHR31262">
    <property type="entry name" value="RIBULOSE BISPHOSPHATE CARBOXYLASE SMALL CHAIN 1, CHLOROPLASTIC"/>
    <property type="match status" value="1"/>
</dbReference>
<dbReference type="Pfam" id="PF00101">
    <property type="entry name" value="RuBisCO_small"/>
    <property type="match status" value="1"/>
</dbReference>
<dbReference type="SMART" id="SM00961">
    <property type="entry name" value="RuBisCO_small"/>
    <property type="match status" value="1"/>
</dbReference>
<dbReference type="SUPFAM" id="SSF55239">
    <property type="entry name" value="RuBisCO, small subunit"/>
    <property type="match status" value="1"/>
</dbReference>
<comment type="function">
    <text evidence="1">RuBisCO catalyzes two reactions: the carboxylation of D-ribulose 1,5-bisphosphate, the primary event in carbon dioxide fixation, as well as the oxidative fragmentation of the pentose substrate. Both reactions occur simultaneously and in competition at the same active site. Although the small subunit is not catalytic it is essential for maximal activity.</text>
</comment>
<comment type="subunit">
    <text evidence="1">Heterohexadecamer of 8 large and 8 small subunits.</text>
</comment>
<comment type="miscellaneous">
    <text evidence="1">The basic functional RuBisCO is composed of a large chain homodimer in a 'head-to-tail' conformation. In form I RuBisCO this homodimer is arranged in a barrel-like tetramer with the small subunits forming a tetrameric 'cap' on each end of the 'barrel'.</text>
</comment>
<comment type="similarity">
    <text evidence="1">Belongs to the RuBisCO small chain family.</text>
</comment>